<feature type="chain" id="PRO_0000366138" description="Tirucalladienol synthase">
    <location>
        <begin position="1"/>
        <end position="760"/>
    </location>
</feature>
<feature type="repeat" description="PFTB 1">
    <location>
        <begin position="149"/>
        <end position="190"/>
    </location>
</feature>
<feature type="repeat" description="PFTB 2">
    <location>
        <begin position="641"/>
        <end position="682"/>
    </location>
</feature>
<feature type="active site" description="Proton donor" evidence="1">
    <location>
        <position position="486"/>
    </location>
</feature>
<sequence>MWRLRIGAKAGDDPHLCTTNNFLGRQIWEFDANAGSPAELSEVDQARQNFSNNRSQYKACADLLWRMQFLREKNFEQKIPRVRIEDAKKITFEDAKNTLRRGIHYMAALQSDDGHWPSENAGCIFFNAPFVICLYITGHLDKVFSEEHRKEMLRYMYNHQNDDGGWGIDVESHSFMFCTVINYICLRIFGVDPDHDGESACARARKWIIDHGGATYTPLFGKAWLSVLGVYEWSGCKPIPPEFWFFPSYFPINGGTLWIYLRDTFMAMSYLYGKKFVAKPTPLILQLREELYPQPYAEIVWSQARSRCAKEDLYYPQSLVQDLFWKLVHMFSENILNRWPFNKLIREKAIRTAMELIHYHDEATRYITGGAVPKVFHMLACWVEDPESDYFKKHLARVSHFIWIAEDGLKIQTFGSQIWDTAFVLQVMLAADVDDEIRPTLIKGYSYLRKSQFTENPPGDYINMFRDISKGGWGYSDKDQGWPVSDCISESLECCLIFESMSSEFIGEKMEVERLYDAVNMLLYMQSRNGGISIWEAASGKKWLEWLSPIEFIEDTILEHEYLECTGSAIVVLARFMKQFPGHRTEEVKKFITKGVKYIESLQIADGSWYGNWGICFIYGTFFAVRGLVAAGNTYDNCEAIRRAVRFLLDIQNGEGGWGESFLSCPNKNYIPLEGNKTDVVNTGQALMVLIMGGQMDRDPLPVHRAAKVLINSQMDNGDFPQQEIRGVYKMNVMLNFPTFRNSFTLWALTHYTKAIRLLL</sequence>
<protein>
    <recommendedName>
        <fullName>Tirucalladienol synthase</fullName>
        <ecNumber>5.4.99.56</ecNumber>
    </recommendedName>
    <alternativeName>
        <fullName>Pentacyclic triterpene synthase 3</fullName>
        <shortName>AtPEN3</shortName>
    </alternativeName>
</protein>
<proteinExistence type="evidence at protein level"/>
<gene>
    <name type="primary">PEN3</name>
    <name type="ordered locus">At5g36150</name>
    <name type="ORF">MAB16.10</name>
</gene>
<name>PEN3_ARATH</name>
<dbReference type="EC" id="5.4.99.56"/>
<dbReference type="EMBL" id="AB018112">
    <property type="protein sequence ID" value="BAA96890.1"/>
    <property type="status" value="ALT_SEQ"/>
    <property type="molecule type" value="Genomic_DNA"/>
</dbReference>
<dbReference type="EMBL" id="CP002688">
    <property type="protein sequence ID" value="AED94049.1"/>
    <property type="molecule type" value="Genomic_DNA"/>
</dbReference>
<dbReference type="EMBL" id="CP002688">
    <property type="protein sequence ID" value="ANM70931.1"/>
    <property type="molecule type" value="Genomic_DNA"/>
</dbReference>
<dbReference type="RefSeq" id="NP_001318680.1">
    <property type="nucleotide sequence ID" value="NM_001344127.1"/>
</dbReference>
<dbReference type="RefSeq" id="NP_198464.4">
    <property type="nucleotide sequence ID" value="NM_123006.4"/>
</dbReference>
<dbReference type="SMR" id="Q9LVY2"/>
<dbReference type="FunCoup" id="Q9LVY2">
    <property type="interactions" value="708"/>
</dbReference>
<dbReference type="STRING" id="3702.Q9LVY2"/>
<dbReference type="iPTMnet" id="Q9LVY2"/>
<dbReference type="PaxDb" id="3702-AT5G36150.1"/>
<dbReference type="ProteomicsDB" id="235113"/>
<dbReference type="EnsemblPlants" id="AT5G36150.1">
    <property type="protein sequence ID" value="AT5G36150.1"/>
    <property type="gene ID" value="AT5G36150"/>
</dbReference>
<dbReference type="EnsemblPlants" id="AT5G36150.2">
    <property type="protein sequence ID" value="AT5G36150.2"/>
    <property type="gene ID" value="AT5G36150"/>
</dbReference>
<dbReference type="GeneID" id="833612"/>
<dbReference type="Gramene" id="AT5G36150.1">
    <property type="protein sequence ID" value="AT5G36150.1"/>
    <property type="gene ID" value="AT5G36150"/>
</dbReference>
<dbReference type="Gramene" id="AT5G36150.2">
    <property type="protein sequence ID" value="AT5G36150.2"/>
    <property type="gene ID" value="AT5G36150"/>
</dbReference>
<dbReference type="KEGG" id="ath:AT5G36150"/>
<dbReference type="Araport" id="AT5G36150"/>
<dbReference type="TAIR" id="AT5G36150">
    <property type="gene designation" value="PEN3"/>
</dbReference>
<dbReference type="eggNOG" id="KOG0497">
    <property type="taxonomic scope" value="Eukaryota"/>
</dbReference>
<dbReference type="HOGENOM" id="CLU_009074_2_0_1"/>
<dbReference type="InParanoid" id="Q9LVY2"/>
<dbReference type="OMA" id="WPVSDCI"/>
<dbReference type="PhylomeDB" id="Q9LVY2"/>
<dbReference type="BioCyc" id="ARA:AT5G36150-MONOMER"/>
<dbReference type="BioCyc" id="MetaCyc:AT5G36150-MONOMER"/>
<dbReference type="PRO" id="PR:Q9LVY2"/>
<dbReference type="Proteomes" id="UP000006548">
    <property type="component" value="Chromosome 5"/>
</dbReference>
<dbReference type="ExpressionAtlas" id="Q9LVY2">
    <property type="expression patterns" value="baseline and differential"/>
</dbReference>
<dbReference type="GO" id="GO:0005811">
    <property type="term" value="C:lipid droplet"/>
    <property type="evidence" value="ECO:0007669"/>
    <property type="project" value="InterPro"/>
</dbReference>
<dbReference type="GO" id="GO:0009506">
    <property type="term" value="C:plasmodesma"/>
    <property type="evidence" value="ECO:0007005"/>
    <property type="project" value="TAIR"/>
</dbReference>
<dbReference type="GO" id="GO:0042299">
    <property type="term" value="F:lupeol synthase activity"/>
    <property type="evidence" value="ECO:0000250"/>
    <property type="project" value="TAIR"/>
</dbReference>
<dbReference type="GO" id="GO:0016104">
    <property type="term" value="P:triterpenoid biosynthetic process"/>
    <property type="evidence" value="ECO:0007669"/>
    <property type="project" value="InterPro"/>
</dbReference>
<dbReference type="CDD" id="cd02892">
    <property type="entry name" value="SQCY_1"/>
    <property type="match status" value="1"/>
</dbReference>
<dbReference type="FunFam" id="1.50.10.20:FF:000011">
    <property type="entry name" value="Terpene cyclase/mutase family member"/>
    <property type="match status" value="1"/>
</dbReference>
<dbReference type="Gene3D" id="1.50.10.20">
    <property type="match status" value="2"/>
</dbReference>
<dbReference type="InterPro" id="IPR032696">
    <property type="entry name" value="SQ_cyclase_C"/>
</dbReference>
<dbReference type="InterPro" id="IPR032697">
    <property type="entry name" value="SQ_cyclase_N"/>
</dbReference>
<dbReference type="InterPro" id="IPR018333">
    <property type="entry name" value="Squalene_cyclase"/>
</dbReference>
<dbReference type="InterPro" id="IPR002365">
    <property type="entry name" value="Terpene_synthase_CS"/>
</dbReference>
<dbReference type="InterPro" id="IPR008930">
    <property type="entry name" value="Terpenoid_cyclase/PrenylTrfase"/>
</dbReference>
<dbReference type="NCBIfam" id="TIGR01787">
    <property type="entry name" value="squalene_cyclas"/>
    <property type="match status" value="1"/>
</dbReference>
<dbReference type="PANTHER" id="PTHR11764">
    <property type="entry name" value="TERPENE CYCLASE/MUTASE FAMILY MEMBER"/>
    <property type="match status" value="1"/>
</dbReference>
<dbReference type="PANTHER" id="PTHR11764:SF57">
    <property type="entry name" value="TIRUCALLADIENOL SYNTHASE-RELATED"/>
    <property type="match status" value="1"/>
</dbReference>
<dbReference type="Pfam" id="PF13243">
    <property type="entry name" value="SQHop_cyclase_C"/>
    <property type="match status" value="1"/>
</dbReference>
<dbReference type="Pfam" id="PF13249">
    <property type="entry name" value="SQHop_cyclase_N"/>
    <property type="match status" value="1"/>
</dbReference>
<dbReference type="SUPFAM" id="SSF48239">
    <property type="entry name" value="Terpenoid cyclases/Protein prenyltransferases"/>
    <property type="match status" value="2"/>
</dbReference>
<dbReference type="PROSITE" id="PS01074">
    <property type="entry name" value="TERPENE_SYNTHASES"/>
    <property type="match status" value="1"/>
</dbReference>
<evidence type="ECO:0000250" key="1">
    <source>
        <dbReference type="UniProtKB" id="P48449"/>
    </source>
</evidence>
<evidence type="ECO:0000269" key="2">
    <source>
    </source>
</evidence>
<evidence type="ECO:0000305" key="3"/>
<reference key="1">
    <citation type="journal article" date="2000" name="DNA Res.">
        <title>Structural analysis of Arabidopsis thaliana chromosome 5. X. Sequence features of the regions of 3,076,755 bp covered by sixty P1 and TAC clones.</title>
        <authorList>
            <person name="Sato S."/>
            <person name="Nakamura Y."/>
            <person name="Kaneko T."/>
            <person name="Katoh T."/>
            <person name="Asamizu E."/>
            <person name="Kotani H."/>
            <person name="Tabata S."/>
        </authorList>
    </citation>
    <scope>NUCLEOTIDE SEQUENCE [LARGE SCALE GENOMIC DNA]</scope>
    <source>
        <strain>cv. Columbia</strain>
    </source>
</reference>
<reference key="2">
    <citation type="journal article" date="2017" name="Plant J.">
        <title>Araport11: a complete reannotation of the Arabidopsis thaliana reference genome.</title>
        <authorList>
            <person name="Cheng C.Y."/>
            <person name="Krishnakumar V."/>
            <person name="Chan A.P."/>
            <person name="Thibaud-Nissen F."/>
            <person name="Schobel S."/>
            <person name="Town C.D."/>
        </authorList>
    </citation>
    <scope>GENOME REANNOTATION</scope>
    <source>
        <strain>cv. Columbia</strain>
    </source>
</reference>
<reference key="3">
    <citation type="journal article" date="2001" name="Plant Mol. Biol.">
        <title>Molecular cloning and expression in yeast of 2,3-oxidosqualene-triterpenoid cyclases from Arabidopsis thaliana.</title>
        <authorList>
            <person name="Husselstein-Muller T."/>
            <person name="Schaller H."/>
            <person name="Benveniste P."/>
        </authorList>
    </citation>
    <scope>IDENTIFICATION</scope>
    <scope>NOMENCLATURE</scope>
</reference>
<reference key="4">
    <citation type="journal article" date="2009" name="Org. Lett.">
        <title>Product profile of PEN3: the last unexamined oxidosqualene cyclase in Arabidopsis thaliana.</title>
        <authorList>
            <person name="Morlacchi P."/>
            <person name="Wilson W.K."/>
            <person name="Xiong Q."/>
            <person name="Bhaduri A."/>
            <person name="Sttivend D."/>
            <person name="Kolesnikova M.D."/>
            <person name="Matsuda S.P.T."/>
        </authorList>
    </citation>
    <scope>FUNCTION</scope>
    <scope>CATALYTIC ACTIVITY</scope>
</reference>
<organism>
    <name type="scientific">Arabidopsis thaliana</name>
    <name type="common">Mouse-ear cress</name>
    <dbReference type="NCBI Taxonomy" id="3702"/>
    <lineage>
        <taxon>Eukaryota</taxon>
        <taxon>Viridiplantae</taxon>
        <taxon>Streptophyta</taxon>
        <taxon>Embryophyta</taxon>
        <taxon>Tracheophyta</taxon>
        <taxon>Spermatophyta</taxon>
        <taxon>Magnoliopsida</taxon>
        <taxon>eudicotyledons</taxon>
        <taxon>Gunneridae</taxon>
        <taxon>Pentapetalae</taxon>
        <taxon>rosids</taxon>
        <taxon>malvids</taxon>
        <taxon>Brassicales</taxon>
        <taxon>Brassicaceae</taxon>
        <taxon>Camelineae</taxon>
        <taxon>Arabidopsis</taxon>
    </lineage>
</organism>
<accession>Q9LVY2</accession>
<keyword id="KW-0413">Isomerase</keyword>
<keyword id="KW-1185">Reference proteome</keyword>
<keyword id="KW-0677">Repeat</keyword>
<comment type="function">
    <text evidence="2">Converts oxidosqualene to tirucalladienol.</text>
</comment>
<comment type="catalytic activity">
    <reaction evidence="2">
        <text>(S)-2,3-epoxysqualene = tirucalla-7,24-dien-3beta-ol</text>
        <dbReference type="Rhea" id="RHEA:31887"/>
        <dbReference type="ChEBI" id="CHEBI:15441"/>
        <dbReference type="ChEBI" id="CHEBI:63468"/>
        <dbReference type="EC" id="5.4.99.56"/>
    </reaction>
</comment>
<comment type="similarity">
    <text evidence="3">Belongs to the terpene cyclase/mutase family.</text>
</comment>
<comment type="sequence caution" evidence="3">
    <conflict type="erroneous gene model prediction">
        <sequence resource="EMBL-CDS" id="BAA96890"/>
    </conflict>
</comment>